<evidence type="ECO:0000250" key="1">
    <source>
        <dbReference type="UniProtKB" id="O95298"/>
    </source>
</evidence>
<evidence type="ECO:0000255" key="2"/>
<evidence type="ECO:0000305" key="3"/>
<feature type="chain" id="PRO_0000251852" description="NADH dehydrogenase [ubiquinone] 1 subunit C2">
    <location>
        <begin position="1"/>
        <end position="119"/>
    </location>
</feature>
<feature type="transmembrane region" description="Helical" evidence="2">
    <location>
        <begin position="56"/>
        <end position="75"/>
    </location>
</feature>
<reference key="1">
    <citation type="journal article" date="2006" name="Gene">
        <title>Adaptive selection of mitochondrial complex I subunits during primate radiation.</title>
        <authorList>
            <person name="Mishmar D."/>
            <person name="Ruiz-Pesini E."/>
            <person name="Mondragon-Palomino M."/>
            <person name="Procaccio V."/>
            <person name="Gaut B."/>
            <person name="Wallace D.C."/>
        </authorList>
    </citation>
    <scope>NUCLEOTIDE SEQUENCE [MRNA]</scope>
</reference>
<sequence length="119" mass="14182">MIARRNPEPLRFLPDEARSLPPPKLTDPRLLYLGFLGYCSGLIDNLIRRRPIATAGLHRQLLYITAFFFAGYYLVKRENYLYAVRDREMFGYMKLHPEEFPEEEKKTYGEIFEKFHPVH</sequence>
<comment type="function">
    <text evidence="1">Accessory subunit of the mitochondrial membrane respiratory chain NADH dehydrogenase (Complex I), that is believed not to be involved in catalysis but required for the complex assembly. Complex I functions in the transfer of electrons from NADH to the respiratory chain. The immediate electron acceptor for the enzyme is believed to be ubiquinone.</text>
</comment>
<comment type="subunit">
    <text evidence="1">Complex I is composed of 45 different subunits. Interacts with TMEM242 (By similarity).</text>
</comment>
<comment type="subcellular location">
    <subcellularLocation>
        <location evidence="1">Mitochondrion inner membrane</location>
        <topology evidence="2">Single-pass membrane protein</topology>
        <orientation evidence="1">Matrix side</orientation>
    </subcellularLocation>
</comment>
<comment type="similarity">
    <text evidence="3">Belongs to the complex I NDUFC2 subunit family.</text>
</comment>
<dbReference type="EMBL" id="DQ885677">
    <property type="protein sequence ID" value="ABH12186.1"/>
    <property type="molecule type" value="mRNA"/>
</dbReference>
<dbReference type="SMR" id="Q0MQF7"/>
<dbReference type="GO" id="GO:0005743">
    <property type="term" value="C:mitochondrial inner membrane"/>
    <property type="evidence" value="ECO:0007669"/>
    <property type="project" value="UniProtKB-SubCell"/>
</dbReference>
<dbReference type="GO" id="GO:0045271">
    <property type="term" value="C:respiratory chain complex I"/>
    <property type="evidence" value="ECO:0000250"/>
    <property type="project" value="UniProtKB"/>
</dbReference>
<dbReference type="GO" id="GO:0006120">
    <property type="term" value="P:mitochondrial electron transport, NADH to ubiquinone"/>
    <property type="evidence" value="ECO:0007669"/>
    <property type="project" value="InterPro"/>
</dbReference>
<dbReference type="InterPro" id="IPR009423">
    <property type="entry name" value="NDUC2"/>
</dbReference>
<dbReference type="PANTHER" id="PTHR13099:SF0">
    <property type="entry name" value="NADH DEHYDROGENASE [UBIQUINONE] 1 SUBUNIT C2-RELATED"/>
    <property type="match status" value="1"/>
</dbReference>
<dbReference type="PANTHER" id="PTHR13099">
    <property type="entry name" value="NADH-UBIQUINONE OXIDOREDUCTASE SUBUNIT B14.5B"/>
    <property type="match status" value="1"/>
</dbReference>
<dbReference type="Pfam" id="PF06374">
    <property type="entry name" value="NDUF_C2"/>
    <property type="match status" value="1"/>
</dbReference>
<dbReference type="PIRSF" id="PIRSF017834">
    <property type="entry name" value="NADH-UbQ_OxRdtase_b14.5b"/>
    <property type="match status" value="1"/>
</dbReference>
<organism>
    <name type="scientific">Pongo pygmaeus</name>
    <name type="common">Bornean orangutan</name>
    <dbReference type="NCBI Taxonomy" id="9600"/>
    <lineage>
        <taxon>Eukaryota</taxon>
        <taxon>Metazoa</taxon>
        <taxon>Chordata</taxon>
        <taxon>Craniata</taxon>
        <taxon>Vertebrata</taxon>
        <taxon>Euteleostomi</taxon>
        <taxon>Mammalia</taxon>
        <taxon>Eutheria</taxon>
        <taxon>Euarchontoglires</taxon>
        <taxon>Primates</taxon>
        <taxon>Haplorrhini</taxon>
        <taxon>Catarrhini</taxon>
        <taxon>Hominidae</taxon>
        <taxon>Pongo</taxon>
    </lineage>
</organism>
<proteinExistence type="inferred from homology"/>
<name>NDUC2_PONPY</name>
<accession>Q0MQF7</accession>
<keyword id="KW-0249">Electron transport</keyword>
<keyword id="KW-0472">Membrane</keyword>
<keyword id="KW-0496">Mitochondrion</keyword>
<keyword id="KW-0999">Mitochondrion inner membrane</keyword>
<keyword id="KW-0679">Respiratory chain</keyword>
<keyword id="KW-0812">Transmembrane</keyword>
<keyword id="KW-1133">Transmembrane helix</keyword>
<keyword id="KW-0813">Transport</keyword>
<protein>
    <recommendedName>
        <fullName evidence="1">NADH dehydrogenase [ubiquinone] 1 subunit C2</fullName>
    </recommendedName>
    <alternativeName>
        <fullName>Complex I-B14.5b</fullName>
        <shortName>CI-B14.5b</shortName>
    </alternativeName>
    <alternativeName>
        <fullName>NADH-ubiquinone oxidoreductase subunit B14.5b</fullName>
    </alternativeName>
</protein>
<gene>
    <name evidence="1" type="primary">NDUFC2</name>
</gene>